<feature type="chain" id="PRO_0000068492" description="Protein TrbH">
    <location>
        <begin position="1"/>
        <end position="239"/>
    </location>
</feature>
<feature type="transmembrane region" description="Helical" evidence="1">
    <location>
        <begin position="208"/>
        <end position="228"/>
    </location>
</feature>
<feature type="sequence conflict" description="In Ref. 3; AAC44210." evidence="2" ref="3">
    <original>C</original>
    <variation>S</variation>
    <location>
        <position position="214"/>
    </location>
</feature>
<geneLocation type="plasmid">
    <name>F</name>
</geneLocation>
<keyword id="KW-0997">Cell inner membrane</keyword>
<keyword id="KW-1003">Cell membrane</keyword>
<keyword id="KW-0184">Conjugation</keyword>
<keyword id="KW-0472">Membrane</keyword>
<keyword id="KW-0614">Plasmid</keyword>
<keyword id="KW-0812">Transmembrane</keyword>
<keyword id="KW-1133">Transmembrane helix</keyword>
<protein>
    <recommendedName>
        <fullName>Protein TrbH</fullName>
    </recommendedName>
</protein>
<organism>
    <name type="scientific">Escherichia coli (strain K12)</name>
    <dbReference type="NCBI Taxonomy" id="83333"/>
    <lineage>
        <taxon>Bacteria</taxon>
        <taxon>Pseudomonadati</taxon>
        <taxon>Pseudomonadota</taxon>
        <taxon>Gammaproteobacteria</taxon>
        <taxon>Enterobacterales</taxon>
        <taxon>Enterobacteriaceae</taxon>
        <taxon>Escherichia</taxon>
    </lineage>
</organism>
<reference key="1">
    <citation type="journal article" date="1990" name="J. Bacteriol.">
        <title>Nucleotide sequence of the traI (helicase I) gene from the sex factor F.</title>
        <authorList>
            <person name="Bradshaw H.D. Jr."/>
            <person name="Traxler B.A."/>
            <person name="Minkley E.G. Jr."/>
            <person name="Nester E.W."/>
            <person name="Gordon M.P."/>
        </authorList>
    </citation>
    <scope>NUCLEOTIDE SEQUENCE [GENOMIC DNA]</scope>
</reference>
<reference key="2">
    <citation type="journal article" date="1989" name="Gene">
        <title>Nucleotide sequence of the traD region in the Escherichia coli F sex factor.</title>
        <authorList>
            <person name="Jalajakumari M.B."/>
            <person name="Manning P.A."/>
        </authorList>
    </citation>
    <scope>NUCLEOTIDE SEQUENCE [GENOMIC DNA]</scope>
    <source>
        <strain>K12</strain>
    </source>
</reference>
<reference key="3">
    <citation type="journal article" date="1994" name="Microbiol. Rev.">
        <title>Analysis of the sequence and gene products of the transfer region of the F sex factor.</title>
        <authorList>
            <person name="Frost L.S."/>
            <person name="Ippen-Ihler K."/>
            <person name="Skurray R.A."/>
        </authorList>
    </citation>
    <scope>NUCLEOTIDE SEQUENCE [GENOMIC DNA]</scope>
</reference>
<reference key="4">
    <citation type="submission" date="2000-04" db="EMBL/GenBank/DDBJ databases">
        <title>Complete nucleotide sequence of the F plasmid: its implications for organization and diversification of plasmid genomes.</title>
        <authorList>
            <person name="Shimizu H."/>
            <person name="Saitoh Y."/>
            <person name="Suda Y."/>
            <person name="Uehara K."/>
            <person name="Sampei G."/>
            <person name="Mizobuchi K."/>
        </authorList>
    </citation>
    <scope>NUCLEOTIDE SEQUENCE [LARGE SCALE GENOMIC DNA]</scope>
    <source>
        <strain>K12 / CR63</strain>
    </source>
</reference>
<evidence type="ECO:0000255" key="1"/>
<evidence type="ECO:0000305" key="2"/>
<name>TRBH_ECOLI</name>
<comment type="subcellular location">
    <subcellularLocation>
        <location evidence="2">Cell inner membrane</location>
        <topology evidence="2">Single-pass membrane protein</topology>
    </subcellularLocation>
</comment>
<sequence length="239" mass="26259">MNRSTPVFNSQAAHTFKFPGVISHNNQSPTAGMTCDHLIKWPDRASLKGKFCSYLAGVCGSSSVVIQNVNAGNKSLDHSEITFRHLAFFCTIYHLHQSDRTDAHSPLVQVKTFPDTGGFVLYRKNADVGIEHKLQHQNDSLSCIPGCSLLSIKSALTLFPSNHSSHVSPAGVMIRVRPTAITSTRFTFSGNATAFGSLTAWLRLLRNTVVSIICLLMWICLVYIHCGIDAGICQRDIRL</sequence>
<accession>P19381</accession>
<proteinExistence type="predicted"/>
<gene>
    <name type="primary">trbH</name>
    <name type="ordered locus">ECOK12F103</name>
</gene>
<dbReference type="EMBL" id="M54796">
    <property type="protein sequence ID" value="AAA98084.1"/>
    <property type="molecule type" value="Genomic_DNA"/>
</dbReference>
<dbReference type="EMBL" id="M29254">
    <property type="protein sequence ID" value="AAA83929.1"/>
    <property type="molecule type" value="Genomic_DNA"/>
</dbReference>
<dbReference type="EMBL" id="U01159">
    <property type="protein sequence ID" value="AAC44210.1"/>
    <property type="molecule type" value="Genomic_DNA"/>
</dbReference>
<dbReference type="EMBL" id="AP001918">
    <property type="protein sequence ID" value="BAA97973.1"/>
    <property type="molecule type" value="Genomic_DNA"/>
</dbReference>
<dbReference type="PIR" id="JS0294">
    <property type="entry name" value="Q4ECTD"/>
</dbReference>
<dbReference type="RefSeq" id="NP_061482.1">
    <property type="nucleotide sequence ID" value="NC_002483.1"/>
</dbReference>
<dbReference type="GO" id="GO:0005886">
    <property type="term" value="C:plasma membrane"/>
    <property type="evidence" value="ECO:0007669"/>
    <property type="project" value="UniProtKB-SubCell"/>
</dbReference>